<proteinExistence type="inferred from homology"/>
<keyword id="KW-0028">Amino-acid biosynthesis</keyword>
<keyword id="KW-0963">Cytoplasm</keyword>
<keyword id="KW-0220">Diaminopimelate biosynthesis</keyword>
<keyword id="KW-0456">Lyase</keyword>
<keyword id="KW-0457">Lysine biosynthesis</keyword>
<keyword id="KW-1185">Reference proteome</keyword>
<keyword id="KW-0704">Schiff base</keyword>
<organism>
    <name type="scientific">Acidothermus cellulolyticus (strain ATCC 43068 / DSM 8971 / 11B)</name>
    <dbReference type="NCBI Taxonomy" id="351607"/>
    <lineage>
        <taxon>Bacteria</taxon>
        <taxon>Bacillati</taxon>
        <taxon>Actinomycetota</taxon>
        <taxon>Actinomycetes</taxon>
        <taxon>Acidothermales</taxon>
        <taxon>Acidothermaceae</taxon>
        <taxon>Acidothermus</taxon>
    </lineage>
</organism>
<sequence>MTTSLRPAPFGRVLTAMVTPFTADGALDLDGAARLATYLVDHGNDGLVISGTTGESPTTTDDEKERLLRAVLDAVGDRATVVAGVGTNDTRHTIELAQRAEKAGAHGLLVVTPYYSKPPQAGLLAHFRQVADATGLPVMLYDIPGRTGTAIEPETMVRLAEHERIVAVKDAKGDFEASSWVLARTDLAYYSGDDKNTLPLLAIGAVGVVGVPTHVFGTQTGAMIAAYLRGDVDGALALHRQLLPVFTGFFRTQGVILAKAALRLAGLPGGPVRPPLVDATAEQVARLREDMAAAGFTEFAEGAEERRG</sequence>
<name>DAPA_ACIC1</name>
<feature type="chain" id="PRO_0000340930" description="4-hydroxy-tetrahydrodipicolinate synthase">
    <location>
        <begin position="1"/>
        <end position="308"/>
    </location>
</feature>
<feature type="active site" description="Proton donor/acceptor" evidence="1">
    <location>
        <position position="141"/>
    </location>
</feature>
<feature type="active site" description="Schiff-base intermediate with substrate" evidence="1">
    <location>
        <position position="169"/>
    </location>
</feature>
<feature type="binding site" evidence="1">
    <location>
        <position position="53"/>
    </location>
    <ligand>
        <name>pyruvate</name>
        <dbReference type="ChEBI" id="CHEBI:15361"/>
    </ligand>
</feature>
<feature type="binding site" evidence="1">
    <location>
        <position position="209"/>
    </location>
    <ligand>
        <name>pyruvate</name>
        <dbReference type="ChEBI" id="CHEBI:15361"/>
    </ligand>
</feature>
<feature type="site" description="Part of a proton relay during catalysis" evidence="1">
    <location>
        <position position="52"/>
    </location>
</feature>
<feature type="site" description="Part of a proton relay during catalysis" evidence="1">
    <location>
        <position position="115"/>
    </location>
</feature>
<reference key="1">
    <citation type="journal article" date="2009" name="Genome Res.">
        <title>Complete genome of the cellulolytic thermophile Acidothermus cellulolyticus 11B provides insights into its ecophysiological and evolutionary adaptations.</title>
        <authorList>
            <person name="Barabote R.D."/>
            <person name="Xie G."/>
            <person name="Leu D.H."/>
            <person name="Normand P."/>
            <person name="Necsulea A."/>
            <person name="Daubin V."/>
            <person name="Medigue C."/>
            <person name="Adney W.S."/>
            <person name="Xu X.C."/>
            <person name="Lapidus A."/>
            <person name="Parales R.E."/>
            <person name="Detter C."/>
            <person name="Pujic P."/>
            <person name="Bruce D."/>
            <person name="Lavire C."/>
            <person name="Challacombe J.F."/>
            <person name="Brettin T.S."/>
            <person name="Berry A.M."/>
        </authorList>
    </citation>
    <scope>NUCLEOTIDE SEQUENCE [LARGE SCALE GENOMIC DNA]</scope>
    <source>
        <strain>ATCC 43068 / DSM 8971 / 11B</strain>
    </source>
</reference>
<dbReference type="EC" id="4.3.3.7" evidence="1"/>
<dbReference type="EMBL" id="CP000481">
    <property type="protein sequence ID" value="ABK53275.1"/>
    <property type="molecule type" value="Genomic_DNA"/>
</dbReference>
<dbReference type="RefSeq" id="WP_011720338.1">
    <property type="nucleotide sequence ID" value="NC_008578.1"/>
</dbReference>
<dbReference type="SMR" id="A0LV15"/>
<dbReference type="FunCoup" id="A0LV15">
    <property type="interactions" value="219"/>
</dbReference>
<dbReference type="STRING" id="351607.Acel_1503"/>
<dbReference type="KEGG" id="ace:Acel_1503"/>
<dbReference type="eggNOG" id="COG0329">
    <property type="taxonomic scope" value="Bacteria"/>
</dbReference>
<dbReference type="HOGENOM" id="CLU_049343_7_1_11"/>
<dbReference type="InParanoid" id="A0LV15"/>
<dbReference type="OrthoDB" id="9782828at2"/>
<dbReference type="UniPathway" id="UPA00034">
    <property type="reaction ID" value="UER00017"/>
</dbReference>
<dbReference type="Proteomes" id="UP000008221">
    <property type="component" value="Chromosome"/>
</dbReference>
<dbReference type="GO" id="GO:0005829">
    <property type="term" value="C:cytosol"/>
    <property type="evidence" value="ECO:0007669"/>
    <property type="project" value="TreeGrafter"/>
</dbReference>
<dbReference type="GO" id="GO:0008840">
    <property type="term" value="F:4-hydroxy-tetrahydrodipicolinate synthase activity"/>
    <property type="evidence" value="ECO:0007669"/>
    <property type="project" value="UniProtKB-UniRule"/>
</dbReference>
<dbReference type="GO" id="GO:0019877">
    <property type="term" value="P:diaminopimelate biosynthetic process"/>
    <property type="evidence" value="ECO:0007669"/>
    <property type="project" value="UniProtKB-UniRule"/>
</dbReference>
<dbReference type="GO" id="GO:0009089">
    <property type="term" value="P:lysine biosynthetic process via diaminopimelate"/>
    <property type="evidence" value="ECO:0007669"/>
    <property type="project" value="UniProtKB-UniRule"/>
</dbReference>
<dbReference type="CDD" id="cd00950">
    <property type="entry name" value="DHDPS"/>
    <property type="match status" value="1"/>
</dbReference>
<dbReference type="Gene3D" id="3.20.20.70">
    <property type="entry name" value="Aldolase class I"/>
    <property type="match status" value="1"/>
</dbReference>
<dbReference type="HAMAP" id="MF_00418">
    <property type="entry name" value="DapA"/>
    <property type="match status" value="1"/>
</dbReference>
<dbReference type="InterPro" id="IPR013785">
    <property type="entry name" value="Aldolase_TIM"/>
</dbReference>
<dbReference type="InterPro" id="IPR005263">
    <property type="entry name" value="DapA"/>
</dbReference>
<dbReference type="InterPro" id="IPR002220">
    <property type="entry name" value="DapA-like"/>
</dbReference>
<dbReference type="InterPro" id="IPR020625">
    <property type="entry name" value="Schiff_base-form_aldolases_AS"/>
</dbReference>
<dbReference type="InterPro" id="IPR020624">
    <property type="entry name" value="Schiff_base-form_aldolases_CS"/>
</dbReference>
<dbReference type="NCBIfam" id="TIGR00674">
    <property type="entry name" value="dapA"/>
    <property type="match status" value="1"/>
</dbReference>
<dbReference type="PANTHER" id="PTHR12128:SF66">
    <property type="entry name" value="4-HYDROXY-2-OXOGLUTARATE ALDOLASE, MITOCHONDRIAL"/>
    <property type="match status" value="1"/>
</dbReference>
<dbReference type="PANTHER" id="PTHR12128">
    <property type="entry name" value="DIHYDRODIPICOLINATE SYNTHASE"/>
    <property type="match status" value="1"/>
</dbReference>
<dbReference type="Pfam" id="PF00701">
    <property type="entry name" value="DHDPS"/>
    <property type="match status" value="1"/>
</dbReference>
<dbReference type="PIRSF" id="PIRSF001365">
    <property type="entry name" value="DHDPS"/>
    <property type="match status" value="1"/>
</dbReference>
<dbReference type="PRINTS" id="PR00146">
    <property type="entry name" value="DHPICSNTHASE"/>
</dbReference>
<dbReference type="SMART" id="SM01130">
    <property type="entry name" value="DHDPS"/>
    <property type="match status" value="1"/>
</dbReference>
<dbReference type="SUPFAM" id="SSF51569">
    <property type="entry name" value="Aldolase"/>
    <property type="match status" value="1"/>
</dbReference>
<dbReference type="PROSITE" id="PS00665">
    <property type="entry name" value="DHDPS_1"/>
    <property type="match status" value="1"/>
</dbReference>
<dbReference type="PROSITE" id="PS00666">
    <property type="entry name" value="DHDPS_2"/>
    <property type="match status" value="1"/>
</dbReference>
<evidence type="ECO:0000255" key="1">
    <source>
        <dbReference type="HAMAP-Rule" id="MF_00418"/>
    </source>
</evidence>
<evidence type="ECO:0000305" key="2"/>
<protein>
    <recommendedName>
        <fullName evidence="1">4-hydroxy-tetrahydrodipicolinate synthase</fullName>
        <shortName evidence="1">HTPA synthase</shortName>
        <ecNumber evidence="1">4.3.3.7</ecNumber>
    </recommendedName>
</protein>
<comment type="function">
    <text evidence="1">Catalyzes the condensation of (S)-aspartate-beta-semialdehyde [(S)-ASA] and pyruvate to 4-hydroxy-tetrahydrodipicolinate (HTPA).</text>
</comment>
<comment type="catalytic activity">
    <reaction evidence="1">
        <text>L-aspartate 4-semialdehyde + pyruvate = (2S,4S)-4-hydroxy-2,3,4,5-tetrahydrodipicolinate + H2O + H(+)</text>
        <dbReference type="Rhea" id="RHEA:34171"/>
        <dbReference type="ChEBI" id="CHEBI:15361"/>
        <dbReference type="ChEBI" id="CHEBI:15377"/>
        <dbReference type="ChEBI" id="CHEBI:15378"/>
        <dbReference type="ChEBI" id="CHEBI:67139"/>
        <dbReference type="ChEBI" id="CHEBI:537519"/>
        <dbReference type="EC" id="4.3.3.7"/>
    </reaction>
</comment>
<comment type="pathway">
    <text evidence="1">Amino-acid biosynthesis; L-lysine biosynthesis via DAP pathway; (S)-tetrahydrodipicolinate from L-aspartate: step 3/4.</text>
</comment>
<comment type="subunit">
    <text evidence="1">Homotetramer; dimer of dimers.</text>
</comment>
<comment type="subcellular location">
    <subcellularLocation>
        <location evidence="1">Cytoplasm</location>
    </subcellularLocation>
</comment>
<comment type="similarity">
    <text evidence="1">Belongs to the DapA family.</text>
</comment>
<comment type="caution">
    <text evidence="2">Was originally thought to be a dihydrodipicolinate synthase (DHDPS), catalyzing the condensation of (S)-aspartate-beta-semialdehyde [(S)-ASA] and pyruvate to dihydrodipicolinate (DHDP). However, it was shown in E.coli that the product of the enzymatic reaction is not dihydrodipicolinate but in fact (4S)-4-hydroxy-2,3,4,5-tetrahydro-(2S)-dipicolinic acid (HTPA), and that the consecutive dehydration reaction leading to DHDP is not spontaneous but catalyzed by DapB.</text>
</comment>
<accession>A0LV15</accession>
<gene>
    <name evidence="1" type="primary">dapA</name>
    <name type="ordered locus">Acel_1503</name>
</gene>